<comment type="function">
    <text evidence="1">Plus-end directed kinesin-like motor enzyme involved in mitotic spindle assembly. Required for centrosome separation and maintenance of spindle bipolarity during mitosis (By similarity).</text>
</comment>
<comment type="subunit">
    <text evidence="1">Homodimer. Dimerization is required for targeting to microtubule minus ends. Found in a complex with tpx2 and microtubules. Its association with microtubules and targeting to microtubule minus ends requires tpx2 (By similarity).</text>
</comment>
<comment type="subcellular location">
    <subcellularLocation>
        <location evidence="1">Cytoplasm</location>
    </subcellularLocation>
    <subcellularLocation>
        <location evidence="1">Cytoplasm</location>
        <location evidence="1">Cytoskeleton</location>
        <location evidence="1">Microtubule organizing center</location>
        <location evidence="1">Centrosome</location>
    </subcellularLocation>
    <subcellularLocation>
        <location evidence="1">Cytoplasm</location>
        <location evidence="1">Cytoskeleton</location>
        <location evidence="1">Spindle</location>
    </subcellularLocation>
    <subcellularLocation>
        <location evidence="1">Cytoplasm</location>
        <location evidence="1">Cytoskeleton</location>
        <location evidence="1">Spindle pole</location>
    </subcellularLocation>
    <text evidence="1">Localizes during metaphase on spindle microtubules, with a strong enrichment at spindle poles. Localizes to the minus ends of spindle pole and aster microtubules in a dynein- and dynactin-dependent manner. Detected diffusively in the cytoplasm. Localized at the centrosome during the interphase and throughout mitosis (By similarity).</text>
</comment>
<comment type="tissue specificity">
    <text evidence="4">Strongly expressed in testis and weakly in lung (at protein level).</text>
</comment>
<comment type="developmental stage">
    <text evidence="4">Expressed maternally in oocytes and eggs (at protein level).</text>
</comment>
<comment type="similarity">
    <text evidence="3">Belongs to the TRAFAC class myosin-kinesin ATPase superfamily. Kinesin family. KLP2 subfamily.</text>
</comment>
<comment type="sequence caution" evidence="5">
    <conflict type="miscellaneous discrepancy">
        <sequence resource="EMBL-CDS" id="AAH71083"/>
    </conflict>
    <text>Potential poly-A sequence.</text>
</comment>
<protein>
    <recommendedName>
        <fullName>Kinesin-like protein KIF15-B</fullName>
    </recommendedName>
    <alternativeName>
        <fullName>Kinesin-like protein 2-B</fullName>
        <shortName>Xklp2-B</shortName>
    </alternativeName>
</protein>
<gene>
    <name type="primary">kif15-b</name>
</gene>
<name>KI15B_XENLA</name>
<proteinExistence type="evidence at protein level"/>
<feature type="chain" id="PRO_0000328689" description="Kinesin-like protein KIF15-B">
    <location>
        <begin position="1"/>
        <end position="1387"/>
    </location>
</feature>
<feature type="domain" description="Kinesin motor" evidence="3">
    <location>
        <begin position="26"/>
        <end position="364"/>
    </location>
</feature>
<feature type="region of interest" description="Necessary for its targeting to microtubule minus ends">
    <location>
        <begin position="1138"/>
        <end position="1387"/>
    </location>
</feature>
<feature type="coiled-coil region" evidence="2">
    <location>
        <begin position="369"/>
        <end position="1383"/>
    </location>
</feature>
<feature type="binding site" evidence="3">
    <location>
        <begin position="110"/>
        <end position="117"/>
    </location>
    <ligand>
        <name>ATP</name>
        <dbReference type="ChEBI" id="CHEBI:30616"/>
    </ligand>
</feature>
<keyword id="KW-0067">ATP-binding</keyword>
<keyword id="KW-0175">Coiled coil</keyword>
<keyword id="KW-0963">Cytoplasm</keyword>
<keyword id="KW-0206">Cytoskeleton</keyword>
<keyword id="KW-0493">Microtubule</keyword>
<keyword id="KW-0505">Motor protein</keyword>
<keyword id="KW-0547">Nucleotide-binding</keyword>
<keyword id="KW-1185">Reference proteome</keyword>
<dbReference type="EMBL" id="BC071083">
    <property type="protein sequence ID" value="AAH71083.1"/>
    <property type="status" value="ALT_SEQ"/>
    <property type="molecule type" value="mRNA"/>
</dbReference>
<dbReference type="EMBL" id="BC100163">
    <property type="protein sequence ID" value="AAI00164.1"/>
    <property type="molecule type" value="mRNA"/>
</dbReference>
<dbReference type="RefSeq" id="NP_001085266.1">
    <property type="nucleotide sequence ID" value="NM_001091797.1"/>
</dbReference>
<dbReference type="SMR" id="Q498L9"/>
<dbReference type="DNASU" id="443568"/>
<dbReference type="GeneID" id="443568"/>
<dbReference type="KEGG" id="xla:443568"/>
<dbReference type="AGR" id="Xenbase:XB-GENE-6252112"/>
<dbReference type="CTD" id="443568"/>
<dbReference type="OrthoDB" id="3176171at2759"/>
<dbReference type="Proteomes" id="UP000186698">
    <property type="component" value="Chromosome 6S"/>
</dbReference>
<dbReference type="Bgee" id="443568">
    <property type="expression patterns" value="Expressed in egg cell and 12 other cell types or tissues"/>
</dbReference>
<dbReference type="GO" id="GO:0005813">
    <property type="term" value="C:centrosome"/>
    <property type="evidence" value="ECO:0007669"/>
    <property type="project" value="UniProtKB-SubCell"/>
</dbReference>
<dbReference type="GO" id="GO:0005737">
    <property type="term" value="C:cytoplasm"/>
    <property type="evidence" value="ECO:0007669"/>
    <property type="project" value="UniProtKB-SubCell"/>
</dbReference>
<dbReference type="GO" id="GO:0005874">
    <property type="term" value="C:microtubule"/>
    <property type="evidence" value="ECO:0007669"/>
    <property type="project" value="UniProtKB-KW"/>
</dbReference>
<dbReference type="GO" id="GO:0000922">
    <property type="term" value="C:spindle pole"/>
    <property type="evidence" value="ECO:0000250"/>
    <property type="project" value="UniProtKB"/>
</dbReference>
<dbReference type="GO" id="GO:0005524">
    <property type="term" value="F:ATP binding"/>
    <property type="evidence" value="ECO:0007669"/>
    <property type="project" value="UniProtKB-KW"/>
</dbReference>
<dbReference type="GO" id="GO:0008017">
    <property type="term" value="F:microtubule binding"/>
    <property type="evidence" value="ECO:0007669"/>
    <property type="project" value="InterPro"/>
</dbReference>
<dbReference type="GO" id="GO:0008574">
    <property type="term" value="F:plus-end-directed microtubule motor activity"/>
    <property type="evidence" value="ECO:0000250"/>
    <property type="project" value="UniProtKB"/>
</dbReference>
<dbReference type="GO" id="GO:0051299">
    <property type="term" value="P:centrosome separation"/>
    <property type="evidence" value="ECO:0000250"/>
    <property type="project" value="UniProtKB"/>
</dbReference>
<dbReference type="GO" id="GO:0007018">
    <property type="term" value="P:microtubule-based movement"/>
    <property type="evidence" value="ECO:0007669"/>
    <property type="project" value="InterPro"/>
</dbReference>
<dbReference type="GO" id="GO:0090307">
    <property type="term" value="P:mitotic spindle assembly"/>
    <property type="evidence" value="ECO:0000250"/>
    <property type="project" value="UniProtKB"/>
</dbReference>
<dbReference type="CDD" id="cd01373">
    <property type="entry name" value="KISc_KLP2_like"/>
    <property type="match status" value="1"/>
</dbReference>
<dbReference type="FunFam" id="3.40.850.10:FF:000034">
    <property type="entry name" value="Kinesin family member 15"/>
    <property type="match status" value="1"/>
</dbReference>
<dbReference type="Gene3D" id="3.40.850.10">
    <property type="entry name" value="Kinesin motor domain"/>
    <property type="match status" value="1"/>
</dbReference>
<dbReference type="InterPro" id="IPR031794">
    <property type="entry name" value="HMMR_C"/>
</dbReference>
<dbReference type="InterPro" id="IPR044986">
    <property type="entry name" value="KIF15/KIN-12"/>
</dbReference>
<dbReference type="InterPro" id="IPR019821">
    <property type="entry name" value="Kinesin_motor_CS"/>
</dbReference>
<dbReference type="InterPro" id="IPR001752">
    <property type="entry name" value="Kinesin_motor_dom"/>
</dbReference>
<dbReference type="InterPro" id="IPR036961">
    <property type="entry name" value="Kinesin_motor_dom_sf"/>
</dbReference>
<dbReference type="InterPro" id="IPR027417">
    <property type="entry name" value="P-loop_NTPase"/>
</dbReference>
<dbReference type="PANTHER" id="PTHR37739">
    <property type="entry name" value="KINESIN-LIKE PROTEIN KIN-12D"/>
    <property type="match status" value="1"/>
</dbReference>
<dbReference type="PANTHER" id="PTHR37739:SF8">
    <property type="entry name" value="KINESIN-LIKE PROTEIN KIN-12D"/>
    <property type="match status" value="1"/>
</dbReference>
<dbReference type="Pfam" id="PF15908">
    <property type="entry name" value="HMMR_C"/>
    <property type="match status" value="1"/>
</dbReference>
<dbReference type="Pfam" id="PF00225">
    <property type="entry name" value="Kinesin"/>
    <property type="match status" value="1"/>
</dbReference>
<dbReference type="PRINTS" id="PR00380">
    <property type="entry name" value="KINESINHEAVY"/>
</dbReference>
<dbReference type="SMART" id="SM00129">
    <property type="entry name" value="KISc"/>
    <property type="match status" value="1"/>
</dbReference>
<dbReference type="SUPFAM" id="SSF52540">
    <property type="entry name" value="P-loop containing nucleoside triphosphate hydrolases"/>
    <property type="match status" value="1"/>
</dbReference>
<dbReference type="PROSITE" id="PS00411">
    <property type="entry name" value="KINESIN_MOTOR_1"/>
    <property type="match status" value="1"/>
</dbReference>
<dbReference type="PROSITE" id="PS50067">
    <property type="entry name" value="KINESIN_MOTOR_2"/>
    <property type="match status" value="1"/>
</dbReference>
<evidence type="ECO:0000250" key="1"/>
<evidence type="ECO:0000255" key="2"/>
<evidence type="ECO:0000255" key="3">
    <source>
        <dbReference type="PROSITE-ProRule" id="PRU00283"/>
    </source>
</evidence>
<evidence type="ECO:0000269" key="4">
    <source>
    </source>
</evidence>
<evidence type="ECO:0000305" key="5"/>
<accession>Q498L9</accession>
<accession>Q6GR48</accession>
<organism>
    <name type="scientific">Xenopus laevis</name>
    <name type="common">African clawed frog</name>
    <dbReference type="NCBI Taxonomy" id="8355"/>
    <lineage>
        <taxon>Eukaryota</taxon>
        <taxon>Metazoa</taxon>
        <taxon>Chordata</taxon>
        <taxon>Craniata</taxon>
        <taxon>Vertebrata</taxon>
        <taxon>Euteleostomi</taxon>
        <taxon>Amphibia</taxon>
        <taxon>Batrachia</taxon>
        <taxon>Anura</taxon>
        <taxon>Pipoidea</taxon>
        <taxon>Pipidae</taxon>
        <taxon>Xenopodinae</taxon>
        <taxon>Xenopus</taxon>
        <taxon>Xenopus</taxon>
    </lineage>
</organism>
<reference key="1">
    <citation type="submission" date="2005-08" db="EMBL/GenBank/DDBJ databases">
        <authorList>
            <consortium name="NIH - Xenopus Gene Collection (XGC) project"/>
        </authorList>
    </citation>
    <scope>NUCLEOTIDE SEQUENCE [LARGE SCALE MRNA]</scope>
    <source>
        <tissue>Embryo</tissue>
        <tissue>Ovary</tissue>
    </source>
</reference>
<reference key="2">
    <citation type="journal article" date="1996" name="Cell">
        <title>Xklp2, a novel Xenopus centrosomal kinesin-like protein required for centrosome separation during mitosis.</title>
        <authorList>
            <person name="Boleti H."/>
            <person name="Karsenti E."/>
            <person name="Vernos I."/>
        </authorList>
    </citation>
    <scope>TISSUE SPECIFICITY</scope>
    <scope>DEVELOPMENTAL STAGE</scope>
</reference>
<sequence length="1387" mass="158559">MPPGTKGDPSNVTQPLPCLPSAEEDAIKVFVRIRPPVEGTLTGVDGEQGSCLTALSSTTIRLHSKPEPKMFTFDHVANVDTTQESVFSSVAKNIVESCMNGYNGTIFAYGQTGSGKTFTMLGPSESDNFTHNLRGVIPRSFEYLFFLINREKEKAGDGKSFLCKCSFIEIYNEQIFDLLDSASAGLFLREHIKKGVFVVGAVEQVVTSAAEAYQVLSMGWRNRRVASTSMNRESSRSHAVFTVTIESMEKTNDIVNIRSSQLNLVDLAGSERQKDTQTEGVRLKEAGSINRSLSCLGQVITALVDVANGRQRHICYRDSKLTFLLRDSLGGNAKTFIIANVHPGSKCFGETLSTLQFAQRAKLIKNKAVVNEDTQGNVSQLQAEVKKLKEQLSQLLSGQMPGDISVARAPSVGDNMDYMNTFIEAMMLLERSDSEKKALLQKVIQLEDLCNKKEKFIQSNKMIVKFREDHIVRLEKAHREGQISLSNNEQDNFIAELKEEIRTLKEQVEHHPRVAKYALENHSLREENKRIGSLQSVKRAQEVSAQMMAELEKAFLEASVSEKDRQVAPMHSTPIQLDNSSLMSAARMRERMLQLESELATSKQEYEEFKELTKKKQVEQESELQSLMKSNQHLENILDAIKENKRHEVSQLNRMHAETIKNMTTPTKAYNLRSRLVPRLSLDGISNGLTDTPKSGDVMDDIINEPIPPEMSEQAYEAIAEELRIVQEQVTALQVKLDEEESKNIKLEQQVNKLELCSTQIQELFNSERSNWNKEQQAFIAQIKSLEKQQQDNKNQEDVLKSEVHDLRVVLQSADRELSAVKGEYSLFREKQEKELSQLSARHMAVQLQLDNFRLEHETLLEEKRSLQDAFDNLEEVMKFETDQLKQELSDSKHENETLRAELSNLLELLETEKERRQKLTSQLEEDKESKTKELLQVVDENMHLRKQCSELVTKCEHQVTELQRLEHSLTSSKEMIADLEKKNTADKEVVVDLMNQIQVHRTTIIHKTESIDLLTRELEDINSKYSIVLLAKEECKTVNEEQEKQIEELRESLERKQSADNIEKELLCDDLAHATEELGKLTEAFNKQETMLHACEKELVEKEQLISELTNKVKLMTDLEITKTEQEKIKPSHSNSNSPVVLAQTPRTPVGNPYESEFANLQNRNTNLAVLISELNEERTLKNEEIIKLKMQLCETENMHLEIQNLQGICKELKSQLENCKKGMKDGNEQKPSDMQDLKREIEKEVSERMEKGKATEHILKLQAELEETRNLLCAKDHSLNELNNEMERTRSLEAKAFTEKEQIRSVLEAKYEETEKLSQELDMLRKQVSFLAEENGKILGHQNPNQKIQYLVKLKKENDKLLEEAEKLRIENLFLKETKKCEHCD</sequence>